<name>FABZ_STAAC</name>
<feature type="chain" id="PRO_0000091730" description="3-hydroxyacyl-[acyl-carrier-protein] dehydratase FabZ">
    <location>
        <begin position="1"/>
        <end position="146"/>
    </location>
</feature>
<feature type="active site" evidence="1">
    <location>
        <position position="51"/>
    </location>
</feature>
<organism>
    <name type="scientific">Staphylococcus aureus (strain COL)</name>
    <dbReference type="NCBI Taxonomy" id="93062"/>
    <lineage>
        <taxon>Bacteria</taxon>
        <taxon>Bacillati</taxon>
        <taxon>Bacillota</taxon>
        <taxon>Bacilli</taxon>
        <taxon>Bacillales</taxon>
        <taxon>Staphylococcaceae</taxon>
        <taxon>Staphylococcus</taxon>
    </lineage>
</organism>
<keyword id="KW-0963">Cytoplasm</keyword>
<keyword id="KW-0441">Lipid A biosynthesis</keyword>
<keyword id="KW-0444">Lipid biosynthesis</keyword>
<keyword id="KW-0443">Lipid metabolism</keyword>
<keyword id="KW-0456">Lyase</keyword>
<accession>Q5HEA1</accession>
<dbReference type="EC" id="4.2.1.59" evidence="1"/>
<dbReference type="EMBL" id="CP000046">
    <property type="protein sequence ID" value="AAW37052.1"/>
    <property type="molecule type" value="Genomic_DNA"/>
</dbReference>
<dbReference type="RefSeq" id="WP_000447678.1">
    <property type="nucleotide sequence ID" value="NZ_JBGOFO010000007.1"/>
</dbReference>
<dbReference type="SMR" id="Q5HEA1"/>
<dbReference type="KEGG" id="sac:SACOL2091"/>
<dbReference type="HOGENOM" id="CLU_078912_3_0_9"/>
<dbReference type="Proteomes" id="UP000000530">
    <property type="component" value="Chromosome"/>
</dbReference>
<dbReference type="GO" id="GO:0005737">
    <property type="term" value="C:cytoplasm"/>
    <property type="evidence" value="ECO:0007669"/>
    <property type="project" value="UniProtKB-SubCell"/>
</dbReference>
<dbReference type="GO" id="GO:0016020">
    <property type="term" value="C:membrane"/>
    <property type="evidence" value="ECO:0007669"/>
    <property type="project" value="GOC"/>
</dbReference>
<dbReference type="GO" id="GO:0019171">
    <property type="term" value="F:(3R)-hydroxyacyl-[acyl-carrier-protein] dehydratase activity"/>
    <property type="evidence" value="ECO:0007669"/>
    <property type="project" value="UniProtKB-EC"/>
</dbReference>
<dbReference type="GO" id="GO:0006633">
    <property type="term" value="P:fatty acid biosynthetic process"/>
    <property type="evidence" value="ECO:0007669"/>
    <property type="project" value="UniProtKB-UniRule"/>
</dbReference>
<dbReference type="GO" id="GO:0009245">
    <property type="term" value="P:lipid A biosynthetic process"/>
    <property type="evidence" value="ECO:0007669"/>
    <property type="project" value="UniProtKB-UniRule"/>
</dbReference>
<dbReference type="CDD" id="cd01288">
    <property type="entry name" value="FabZ"/>
    <property type="match status" value="1"/>
</dbReference>
<dbReference type="FunFam" id="3.10.129.10:FF:000001">
    <property type="entry name" value="3-hydroxyacyl-[acyl-carrier-protein] dehydratase FabZ"/>
    <property type="match status" value="1"/>
</dbReference>
<dbReference type="Gene3D" id="3.10.129.10">
    <property type="entry name" value="Hotdog Thioesterase"/>
    <property type="match status" value="1"/>
</dbReference>
<dbReference type="HAMAP" id="MF_00406">
    <property type="entry name" value="FabZ"/>
    <property type="match status" value="1"/>
</dbReference>
<dbReference type="InterPro" id="IPR013114">
    <property type="entry name" value="FabA_FabZ"/>
</dbReference>
<dbReference type="InterPro" id="IPR010084">
    <property type="entry name" value="FabZ"/>
</dbReference>
<dbReference type="InterPro" id="IPR029069">
    <property type="entry name" value="HotDog_dom_sf"/>
</dbReference>
<dbReference type="NCBIfam" id="TIGR01750">
    <property type="entry name" value="fabZ"/>
    <property type="match status" value="1"/>
</dbReference>
<dbReference type="NCBIfam" id="NF000582">
    <property type="entry name" value="PRK00006.1"/>
    <property type="match status" value="1"/>
</dbReference>
<dbReference type="PANTHER" id="PTHR30272">
    <property type="entry name" value="3-HYDROXYACYL-[ACYL-CARRIER-PROTEIN] DEHYDRATASE"/>
    <property type="match status" value="1"/>
</dbReference>
<dbReference type="PANTHER" id="PTHR30272:SF1">
    <property type="entry name" value="3-HYDROXYACYL-[ACYL-CARRIER-PROTEIN] DEHYDRATASE"/>
    <property type="match status" value="1"/>
</dbReference>
<dbReference type="Pfam" id="PF07977">
    <property type="entry name" value="FabA"/>
    <property type="match status" value="1"/>
</dbReference>
<dbReference type="SUPFAM" id="SSF54637">
    <property type="entry name" value="Thioesterase/thiol ester dehydrase-isomerase"/>
    <property type="match status" value="1"/>
</dbReference>
<protein>
    <recommendedName>
        <fullName evidence="1">3-hydroxyacyl-[acyl-carrier-protein] dehydratase FabZ</fullName>
        <ecNumber evidence="1">4.2.1.59</ecNumber>
    </recommendedName>
    <alternativeName>
        <fullName evidence="1">(3R)-hydroxymyristoyl-[acyl-carrier-protein] dehydratase</fullName>
        <shortName evidence="1">(3R)-hydroxymyristoyl-ACP dehydrase</shortName>
    </alternativeName>
    <alternativeName>
        <fullName evidence="1">Beta-hydroxyacyl-ACP dehydratase</fullName>
    </alternativeName>
</protein>
<sequence length="146" mass="16082">METIFDYNQIKQIIPHRQPFLLIDKVVEYEEGQRCVAIKQVSGNEPFFQGHFPEYAVMPGVLITEALAQTGAVAILNSEENKGKIALFAGIDKCRFKRQVVPGDTLTLEVEITKIKGPIGKGNAKATVDGQLACSCELTFAIQDVK</sequence>
<evidence type="ECO:0000255" key="1">
    <source>
        <dbReference type="HAMAP-Rule" id="MF_00406"/>
    </source>
</evidence>
<comment type="function">
    <text evidence="1">Involved in unsaturated fatty acids biosynthesis. Catalyzes the dehydration of short chain beta-hydroxyacyl-ACPs and long chain saturated and unsaturated beta-hydroxyacyl-ACPs.</text>
</comment>
<comment type="catalytic activity">
    <reaction evidence="1">
        <text>a (3R)-hydroxyacyl-[ACP] = a (2E)-enoyl-[ACP] + H2O</text>
        <dbReference type="Rhea" id="RHEA:13097"/>
        <dbReference type="Rhea" id="RHEA-COMP:9925"/>
        <dbReference type="Rhea" id="RHEA-COMP:9945"/>
        <dbReference type="ChEBI" id="CHEBI:15377"/>
        <dbReference type="ChEBI" id="CHEBI:78784"/>
        <dbReference type="ChEBI" id="CHEBI:78827"/>
        <dbReference type="EC" id="4.2.1.59"/>
    </reaction>
</comment>
<comment type="subcellular location">
    <subcellularLocation>
        <location evidence="1">Cytoplasm</location>
    </subcellularLocation>
</comment>
<comment type="similarity">
    <text evidence="1">Belongs to the thioester dehydratase family. FabZ subfamily.</text>
</comment>
<reference key="1">
    <citation type="journal article" date="2005" name="J. Bacteriol.">
        <title>Insights on evolution of virulence and resistance from the complete genome analysis of an early methicillin-resistant Staphylococcus aureus strain and a biofilm-producing methicillin-resistant Staphylococcus epidermidis strain.</title>
        <authorList>
            <person name="Gill S.R."/>
            <person name="Fouts D.E."/>
            <person name="Archer G.L."/>
            <person name="Mongodin E.F."/>
            <person name="DeBoy R.T."/>
            <person name="Ravel J."/>
            <person name="Paulsen I.T."/>
            <person name="Kolonay J.F."/>
            <person name="Brinkac L.M."/>
            <person name="Beanan M.J."/>
            <person name="Dodson R.J."/>
            <person name="Daugherty S.C."/>
            <person name="Madupu R."/>
            <person name="Angiuoli S.V."/>
            <person name="Durkin A.S."/>
            <person name="Haft D.H."/>
            <person name="Vamathevan J.J."/>
            <person name="Khouri H."/>
            <person name="Utterback T.R."/>
            <person name="Lee C."/>
            <person name="Dimitrov G."/>
            <person name="Jiang L."/>
            <person name="Qin H."/>
            <person name="Weidman J."/>
            <person name="Tran K."/>
            <person name="Kang K.H."/>
            <person name="Hance I.R."/>
            <person name="Nelson K.E."/>
            <person name="Fraser C.M."/>
        </authorList>
    </citation>
    <scope>NUCLEOTIDE SEQUENCE [LARGE SCALE GENOMIC DNA]</scope>
    <source>
        <strain>COL</strain>
    </source>
</reference>
<gene>
    <name evidence="1" type="primary">fabZ</name>
    <name type="ordered locus">SACOL2091</name>
</gene>
<proteinExistence type="inferred from homology"/>